<protein>
    <recommendedName>
        <fullName evidence="1">Ribosome-binding factor A</fullName>
    </recommendedName>
</protein>
<proteinExistence type="inferred from homology"/>
<keyword id="KW-0963">Cytoplasm</keyword>
<keyword id="KW-1185">Reference proteome</keyword>
<keyword id="KW-0690">Ribosome biogenesis</keyword>
<reference key="1">
    <citation type="submission" date="2007-07" db="EMBL/GenBank/DDBJ databases">
        <title>Complete sequence of Fervidobacterium nodosum Rt17-B1.</title>
        <authorList>
            <consortium name="US DOE Joint Genome Institute"/>
            <person name="Copeland A."/>
            <person name="Lucas S."/>
            <person name="Lapidus A."/>
            <person name="Barry K."/>
            <person name="Glavina del Rio T."/>
            <person name="Dalin E."/>
            <person name="Tice H."/>
            <person name="Pitluck S."/>
            <person name="Saunders E."/>
            <person name="Brettin T."/>
            <person name="Bruce D."/>
            <person name="Detter J.C."/>
            <person name="Han C."/>
            <person name="Schmutz J."/>
            <person name="Larimer F."/>
            <person name="Land M."/>
            <person name="Hauser L."/>
            <person name="Kyrpides N."/>
            <person name="Mikhailova N."/>
            <person name="Nelson K."/>
            <person name="Gogarten J.P."/>
            <person name="Noll K."/>
            <person name="Richardson P."/>
        </authorList>
    </citation>
    <scope>NUCLEOTIDE SEQUENCE [LARGE SCALE GENOMIC DNA]</scope>
    <source>
        <strain>ATCC 35602 / DSM 5306 / Rt17-B1</strain>
    </source>
</reference>
<organism>
    <name type="scientific">Fervidobacterium nodosum (strain ATCC 35602 / DSM 5306 / Rt17-B1)</name>
    <dbReference type="NCBI Taxonomy" id="381764"/>
    <lineage>
        <taxon>Bacteria</taxon>
        <taxon>Thermotogati</taxon>
        <taxon>Thermotogota</taxon>
        <taxon>Thermotogae</taxon>
        <taxon>Thermotogales</taxon>
        <taxon>Fervidobacteriaceae</taxon>
        <taxon>Fervidobacterium</taxon>
    </lineage>
</organism>
<accession>A7HK34</accession>
<name>RBFA_FERNB</name>
<comment type="function">
    <text evidence="1">One of several proteins that assist in the late maturation steps of the functional core of the 30S ribosomal subunit. Associates with free 30S ribosomal subunits (but not with 30S subunits that are part of 70S ribosomes or polysomes). Required for efficient processing of 16S rRNA. May interact with the 5'-terminal helix region of 16S rRNA.</text>
</comment>
<comment type="subunit">
    <text evidence="1">Monomer. Binds 30S ribosomal subunits, but not 50S ribosomal subunits or 70S ribosomes.</text>
</comment>
<comment type="subcellular location">
    <subcellularLocation>
        <location evidence="1">Cytoplasm</location>
    </subcellularLocation>
</comment>
<comment type="similarity">
    <text evidence="1">Belongs to the RbfA family.</text>
</comment>
<dbReference type="EMBL" id="CP000771">
    <property type="protein sequence ID" value="ABS60267.1"/>
    <property type="molecule type" value="Genomic_DNA"/>
</dbReference>
<dbReference type="RefSeq" id="WP_011993587.1">
    <property type="nucleotide sequence ID" value="NC_009718.1"/>
</dbReference>
<dbReference type="SMR" id="A7HK34"/>
<dbReference type="STRING" id="381764.Fnod_0402"/>
<dbReference type="KEGG" id="fno:Fnod_0402"/>
<dbReference type="eggNOG" id="COG0858">
    <property type="taxonomic scope" value="Bacteria"/>
</dbReference>
<dbReference type="HOGENOM" id="CLU_089475_6_5_0"/>
<dbReference type="OrthoDB" id="46605at2"/>
<dbReference type="Proteomes" id="UP000002415">
    <property type="component" value="Chromosome"/>
</dbReference>
<dbReference type="GO" id="GO:0005829">
    <property type="term" value="C:cytosol"/>
    <property type="evidence" value="ECO:0007669"/>
    <property type="project" value="TreeGrafter"/>
</dbReference>
<dbReference type="GO" id="GO:0043024">
    <property type="term" value="F:ribosomal small subunit binding"/>
    <property type="evidence" value="ECO:0007669"/>
    <property type="project" value="TreeGrafter"/>
</dbReference>
<dbReference type="GO" id="GO:0030490">
    <property type="term" value="P:maturation of SSU-rRNA"/>
    <property type="evidence" value="ECO:0007669"/>
    <property type="project" value="UniProtKB-UniRule"/>
</dbReference>
<dbReference type="Gene3D" id="3.30.300.20">
    <property type="match status" value="1"/>
</dbReference>
<dbReference type="HAMAP" id="MF_00003">
    <property type="entry name" value="RbfA"/>
    <property type="match status" value="1"/>
</dbReference>
<dbReference type="InterPro" id="IPR015946">
    <property type="entry name" value="KH_dom-like_a/b"/>
</dbReference>
<dbReference type="InterPro" id="IPR000238">
    <property type="entry name" value="RbfA"/>
</dbReference>
<dbReference type="InterPro" id="IPR023799">
    <property type="entry name" value="RbfA_dom_sf"/>
</dbReference>
<dbReference type="InterPro" id="IPR020053">
    <property type="entry name" value="Ribosome-bd_factorA_CS"/>
</dbReference>
<dbReference type="NCBIfam" id="TIGR00082">
    <property type="entry name" value="rbfA"/>
    <property type="match status" value="1"/>
</dbReference>
<dbReference type="PANTHER" id="PTHR33515">
    <property type="entry name" value="RIBOSOME-BINDING FACTOR A, CHLOROPLASTIC-RELATED"/>
    <property type="match status" value="1"/>
</dbReference>
<dbReference type="PANTHER" id="PTHR33515:SF1">
    <property type="entry name" value="RIBOSOME-BINDING FACTOR A, CHLOROPLASTIC-RELATED"/>
    <property type="match status" value="1"/>
</dbReference>
<dbReference type="Pfam" id="PF02033">
    <property type="entry name" value="RBFA"/>
    <property type="match status" value="1"/>
</dbReference>
<dbReference type="SUPFAM" id="SSF89919">
    <property type="entry name" value="Ribosome-binding factor A, RbfA"/>
    <property type="match status" value="1"/>
</dbReference>
<dbReference type="PROSITE" id="PS01319">
    <property type="entry name" value="RBFA"/>
    <property type="match status" value="1"/>
</dbReference>
<evidence type="ECO:0000255" key="1">
    <source>
        <dbReference type="HAMAP-Rule" id="MF_00003"/>
    </source>
</evidence>
<feature type="chain" id="PRO_1000070906" description="Ribosome-binding factor A">
    <location>
        <begin position="1"/>
        <end position="125"/>
    </location>
</feature>
<gene>
    <name evidence="1" type="primary">rbfA</name>
    <name type="ordered locus">Fnod_0402</name>
</gene>
<sequence length="125" mass="14634">MKQEYKLKMLESEIRKVLSEALMEMKDPNIDPMKSLITISRVEVSKDKRYADVYVSVLGDEAKRKDVVNYFEQKKGYFRTYVAKNIRMYTAPELRFKEDKGIEATVRIGQLLDSIKESQKGDDNK</sequence>